<dbReference type="EC" id="4.2.1.2" evidence="3"/>
<dbReference type="EMBL" id="X78576">
    <property type="protein sequence ID" value="CAA55314.1"/>
    <property type="molecule type" value="Genomic_DNA"/>
</dbReference>
<dbReference type="SMR" id="P55250"/>
<dbReference type="BRENDA" id="4.2.1.2">
    <property type="organism ID" value="5365"/>
</dbReference>
<dbReference type="UniPathway" id="UPA00223">
    <property type="reaction ID" value="UER01007"/>
</dbReference>
<dbReference type="GO" id="GO:0005759">
    <property type="term" value="C:mitochondrial matrix"/>
    <property type="evidence" value="ECO:0007669"/>
    <property type="project" value="UniProtKB-SubCell"/>
</dbReference>
<dbReference type="GO" id="GO:0005739">
    <property type="term" value="C:mitochondrion"/>
    <property type="evidence" value="ECO:0000250"/>
    <property type="project" value="UniProtKB"/>
</dbReference>
<dbReference type="GO" id="GO:0005634">
    <property type="term" value="C:nucleus"/>
    <property type="evidence" value="ECO:0000250"/>
    <property type="project" value="UniProtKB"/>
</dbReference>
<dbReference type="GO" id="GO:0004333">
    <property type="term" value="F:fumarate hydratase activity"/>
    <property type="evidence" value="ECO:0000250"/>
    <property type="project" value="UniProtKB"/>
</dbReference>
<dbReference type="GO" id="GO:0006974">
    <property type="term" value="P:DNA damage response"/>
    <property type="evidence" value="ECO:0000250"/>
    <property type="project" value="UniProtKB"/>
</dbReference>
<dbReference type="GO" id="GO:0006302">
    <property type="term" value="P:double-strand break repair"/>
    <property type="evidence" value="ECO:0000250"/>
    <property type="project" value="UniProtKB"/>
</dbReference>
<dbReference type="GO" id="GO:0006106">
    <property type="term" value="P:fumarate metabolic process"/>
    <property type="evidence" value="ECO:0000250"/>
    <property type="project" value="UniProtKB"/>
</dbReference>
<dbReference type="GO" id="GO:0006108">
    <property type="term" value="P:malate metabolic process"/>
    <property type="evidence" value="ECO:0007669"/>
    <property type="project" value="TreeGrafter"/>
</dbReference>
<dbReference type="GO" id="GO:0006099">
    <property type="term" value="P:tricarboxylic acid cycle"/>
    <property type="evidence" value="ECO:0007669"/>
    <property type="project" value="UniProtKB-UniPathway"/>
</dbReference>
<dbReference type="CDD" id="cd01362">
    <property type="entry name" value="Fumarase_classII"/>
    <property type="match status" value="1"/>
</dbReference>
<dbReference type="FunFam" id="1.10.40.30:FF:000002">
    <property type="entry name" value="Fumarate hydratase class II"/>
    <property type="match status" value="1"/>
</dbReference>
<dbReference type="FunFam" id="1.10.275.10:FF:000001">
    <property type="entry name" value="Fumarate hydratase, mitochondrial"/>
    <property type="match status" value="1"/>
</dbReference>
<dbReference type="FunFam" id="1.20.200.10:FF:000001">
    <property type="entry name" value="Fumarate hydratase, mitochondrial"/>
    <property type="match status" value="1"/>
</dbReference>
<dbReference type="Gene3D" id="1.10.40.30">
    <property type="entry name" value="Fumarase/aspartase (C-terminal domain)"/>
    <property type="match status" value="1"/>
</dbReference>
<dbReference type="Gene3D" id="1.20.200.10">
    <property type="entry name" value="Fumarase/aspartase (Central domain)"/>
    <property type="match status" value="1"/>
</dbReference>
<dbReference type="Gene3D" id="1.10.275.10">
    <property type="entry name" value="Fumarase/aspartase (N-terminal domain)"/>
    <property type="match status" value="1"/>
</dbReference>
<dbReference type="HAMAP" id="MF_00743">
    <property type="entry name" value="FumaraseC"/>
    <property type="match status" value="1"/>
</dbReference>
<dbReference type="InterPro" id="IPR005677">
    <property type="entry name" value="Fum_hydII"/>
</dbReference>
<dbReference type="InterPro" id="IPR024083">
    <property type="entry name" value="Fumarase/histidase_N"/>
</dbReference>
<dbReference type="InterPro" id="IPR018951">
    <property type="entry name" value="Fumarase_C_C"/>
</dbReference>
<dbReference type="InterPro" id="IPR020557">
    <property type="entry name" value="Fumarate_lyase_CS"/>
</dbReference>
<dbReference type="InterPro" id="IPR000362">
    <property type="entry name" value="Fumarate_lyase_fam"/>
</dbReference>
<dbReference type="InterPro" id="IPR022761">
    <property type="entry name" value="Fumarate_lyase_N"/>
</dbReference>
<dbReference type="InterPro" id="IPR008948">
    <property type="entry name" value="L-Aspartase-like"/>
</dbReference>
<dbReference type="NCBIfam" id="TIGR00979">
    <property type="entry name" value="fumC_II"/>
    <property type="match status" value="1"/>
</dbReference>
<dbReference type="NCBIfam" id="NF008909">
    <property type="entry name" value="PRK12273.1"/>
    <property type="match status" value="1"/>
</dbReference>
<dbReference type="PANTHER" id="PTHR11444">
    <property type="entry name" value="ASPARTATEAMMONIA/ARGININOSUCCINATE/ADENYLOSUCCINATE LYASE"/>
    <property type="match status" value="1"/>
</dbReference>
<dbReference type="PANTHER" id="PTHR11444:SF1">
    <property type="entry name" value="FUMARATE HYDRATASE, MITOCHONDRIAL"/>
    <property type="match status" value="1"/>
</dbReference>
<dbReference type="Pfam" id="PF10415">
    <property type="entry name" value="FumaraseC_C"/>
    <property type="match status" value="1"/>
</dbReference>
<dbReference type="Pfam" id="PF00206">
    <property type="entry name" value="Lyase_1"/>
    <property type="match status" value="1"/>
</dbReference>
<dbReference type="PRINTS" id="PR00149">
    <property type="entry name" value="FUMRATELYASE"/>
</dbReference>
<dbReference type="SUPFAM" id="SSF48557">
    <property type="entry name" value="L-aspartase-like"/>
    <property type="match status" value="1"/>
</dbReference>
<dbReference type="PROSITE" id="PS00163">
    <property type="entry name" value="FUMARATE_LYASES"/>
    <property type="match status" value="1"/>
</dbReference>
<sequence>MLRASATRFLSQAKNMNNSPRLFSSASAALQKFRAERDTFGDLQVPADRYWGAQTQRSLQNFDIGGPTERMPEPLIRAFGVLKKAAATVNMTYGLDPKVGEAIQKAADEVIDGSLIDHFPLVVWQTGSGTQTKMNVNEVISNRAIELLGGELGSKAPVHPNDHVNMSQSSNDTFPTAMHVAAVVEIHGRLIPALTTLRDALQAKSAEFEHIIKIGRTHLQDATPLTLGQEFSGYTQQLTYGIARVQGTLERLYNLAQGGTAVGTGLNTRKGFDAKVAEAIASITGLPFKTAPNKFEALAAHDALVEAHGALNTVACSLMKIANDIRYLGSGPRCGLGELSLPENEPGSSIMPGKVNPTQCEAMTMVCAQVMGNNTAISVAGSNGQFELNVFKPVMIKNLIQSIRLISDASISFTKNCVVGIEANEKKISSIMNESLMLVTALNPHIGYDKAAKCAKKAHKEGTTLKEAALSLGYLTSEEFDQWVRPEDMISAKD</sequence>
<comment type="function">
    <text evidence="3">Catalyzes the reversible stereospecific interconversion of fumarate to L-malate. In mitochondrion, catalyzes the hydration of fumarate to L-malate in the tricarboxylic acid (TCA) cycle to facilitate a transition step in the production of energy in the form of NADH. In cytoplasm and nucleus, involved in DNA repair in response to DNA damage: following DNA double-strand breaks (DSBs), translocates from the cytosol to the nucleus and promotes DNA repair by catalyzing the dehydration of L-malate to fumarate.</text>
</comment>
<comment type="catalytic activity">
    <reaction evidence="3">
        <text>(S)-malate = fumarate + H2O</text>
        <dbReference type="Rhea" id="RHEA:12460"/>
        <dbReference type="ChEBI" id="CHEBI:15377"/>
        <dbReference type="ChEBI" id="CHEBI:15589"/>
        <dbReference type="ChEBI" id="CHEBI:29806"/>
        <dbReference type="EC" id="4.2.1.2"/>
    </reaction>
</comment>
<comment type="pathway">
    <text evidence="3">Carbohydrate metabolism; tricarboxylic acid cycle; (S)-malate from fumarate: step 1/1.</text>
</comment>
<comment type="subunit">
    <text evidence="3">Homotetramer.</text>
</comment>
<comment type="subcellular location">
    <subcellularLocation>
        <location evidence="3">Mitochondrion matrix</location>
    </subcellularLocation>
    <subcellularLocation>
        <location evidence="3">Cytoplasm</location>
    </subcellularLocation>
    <subcellularLocation>
        <location evidence="3">Nucleus</location>
    </subcellularLocation>
    <text evidence="3">Translocates from the cytosol to the nucleus in response to DNA damage.</text>
</comment>
<comment type="miscellaneous">
    <text evidence="1">There are 2 substrate-binding sites: the catalytic A site, and the non-catalytic B site that may play a role in the transfer of substrate or product between the active site and the solvent. Alternatively, the B site may bind allosteric effectors (By similarity).</text>
</comment>
<comment type="similarity">
    <text evidence="7">Belongs to the class-II fumarase/aspartase family. Fumarase subfamily.</text>
</comment>
<gene>
    <name evidence="6" type="primary">FUMR</name>
</gene>
<keyword id="KW-0963">Cytoplasm</keyword>
<keyword id="KW-0227">DNA damage</keyword>
<keyword id="KW-0234">DNA repair</keyword>
<keyword id="KW-0456">Lyase</keyword>
<keyword id="KW-0496">Mitochondrion</keyword>
<keyword id="KW-0539">Nucleus</keyword>
<keyword id="KW-0809">Transit peptide</keyword>
<keyword id="KW-0816">Tricarboxylic acid cycle</keyword>
<protein>
    <recommendedName>
        <fullName evidence="3">Fumarate hydratase, mitochondrial</fullName>
        <shortName evidence="6">Fumarase</shortName>
        <ecNumber evidence="3">4.2.1.2</ecNumber>
    </recommendedName>
</protein>
<organism>
    <name type="scientific">Rhizopus oryzae</name>
    <name type="common">Mucormycosis agent</name>
    <name type="synonym">Rhizopus arrhizus var. delemar</name>
    <dbReference type="NCBI Taxonomy" id="64495"/>
    <lineage>
        <taxon>Eukaryota</taxon>
        <taxon>Fungi</taxon>
        <taxon>Fungi incertae sedis</taxon>
        <taxon>Mucoromycota</taxon>
        <taxon>Mucoromycotina</taxon>
        <taxon>Mucoromycetes</taxon>
        <taxon>Mucorales</taxon>
        <taxon>Mucorineae</taxon>
        <taxon>Rhizopodaceae</taxon>
        <taxon>Rhizopus</taxon>
    </lineage>
</organism>
<feature type="transit peptide" description="Mitochondrion" evidence="5">
    <location>
        <begin position="1"/>
        <end position="15"/>
    </location>
</feature>
<feature type="chain" id="PRO_0000010331" description="Fumarate hydratase, mitochondrial">
    <location>
        <begin position="16"/>
        <end position="494"/>
    </location>
</feature>
<feature type="active site" description="Proton donor/acceptor" evidence="2">
    <location>
        <position position="218"/>
    </location>
</feature>
<feature type="active site" evidence="4">
    <location>
        <position position="348"/>
    </location>
</feature>
<feature type="binding site" evidence="2">
    <location>
        <begin position="128"/>
        <end position="130"/>
    </location>
    <ligand>
        <name>substrate</name>
    </ligand>
</feature>
<feature type="binding site" description="in site B" evidence="2">
    <location>
        <begin position="159"/>
        <end position="162"/>
    </location>
    <ligand>
        <name>substrate</name>
    </ligand>
</feature>
<feature type="binding site" evidence="2">
    <location>
        <begin position="169"/>
        <end position="171"/>
    </location>
    <ligand>
        <name>substrate</name>
    </ligand>
</feature>
<feature type="binding site" evidence="4">
    <location>
        <position position="217"/>
    </location>
    <ligand>
        <name>substrate</name>
    </ligand>
</feature>
<feature type="binding site" evidence="4">
    <location>
        <position position="349"/>
    </location>
    <ligand>
        <name>substrate</name>
    </ligand>
</feature>
<feature type="binding site" evidence="4">
    <location>
        <begin position="354"/>
        <end position="356"/>
    </location>
    <ligand>
        <name>substrate</name>
    </ligand>
</feature>
<feature type="site" description="Important for catalytic activity" evidence="2">
    <location>
        <position position="361"/>
    </location>
</feature>
<name>FUMH_RHIOR</name>
<proteinExistence type="inferred from homology"/>
<accession>P55250</accession>
<evidence type="ECO:0000250" key="1"/>
<evidence type="ECO:0000250" key="2">
    <source>
        <dbReference type="UniProtKB" id="P05042"/>
    </source>
</evidence>
<evidence type="ECO:0000250" key="3">
    <source>
        <dbReference type="UniProtKB" id="P08417"/>
    </source>
</evidence>
<evidence type="ECO:0000250" key="4">
    <source>
        <dbReference type="UniProtKB" id="P9WN93"/>
    </source>
</evidence>
<evidence type="ECO:0000255" key="5"/>
<evidence type="ECO:0000303" key="6">
    <source>
    </source>
</evidence>
<evidence type="ECO:0000305" key="7"/>
<reference key="1">
    <citation type="journal article" date="1995" name="Gene">
        <title>The fumR gene encoding fumarase in the filamentous fungus Rhizopus oryzae: cloning, structure and expression.</title>
        <authorList>
            <person name="Friedberg D."/>
            <person name="Peleg Y."/>
            <person name="Monsonego A."/>
            <person name="Maissi S."/>
            <person name="Battat E."/>
            <person name="Rokem J.S."/>
            <person name="Goldberg I."/>
        </authorList>
    </citation>
    <scope>NUCLEOTIDE SEQUENCE [GENOMIC DNA]</scope>
    <source>
        <strain>ATCC 10260 / CBS 329.47 / DSM 905 / NRRL 1526</strain>
    </source>
</reference>